<comment type="function">
    <text evidence="1">One of the primary rRNA binding proteins, it binds specifically to the 5'-end of 16S ribosomal RNA.</text>
</comment>
<comment type="subunit">
    <text evidence="1">Part of the 30S ribosomal subunit.</text>
</comment>
<comment type="similarity">
    <text evidence="1">Belongs to the universal ribosomal protein uS17 family.</text>
</comment>
<organism>
    <name type="scientific">Syntrophotalea carbinolica (strain DSM 2380 / NBRC 103641 / GraBd1)</name>
    <name type="common">Pelobacter carbinolicus</name>
    <dbReference type="NCBI Taxonomy" id="338963"/>
    <lineage>
        <taxon>Bacteria</taxon>
        <taxon>Pseudomonadati</taxon>
        <taxon>Thermodesulfobacteriota</taxon>
        <taxon>Desulfuromonadia</taxon>
        <taxon>Desulfuromonadales</taxon>
        <taxon>Syntrophotaleaceae</taxon>
        <taxon>Syntrophotalea</taxon>
    </lineage>
</organism>
<name>RS17_SYNC1</name>
<gene>
    <name evidence="1" type="primary">rpsQ</name>
    <name type="ordered locus">Pcar_0710</name>
</gene>
<reference key="1">
    <citation type="submission" date="2005-10" db="EMBL/GenBank/DDBJ databases">
        <title>Complete sequence of Pelobacter carbinolicus DSM 2380.</title>
        <authorList>
            <person name="Copeland A."/>
            <person name="Lucas S."/>
            <person name="Lapidus A."/>
            <person name="Barry K."/>
            <person name="Detter J.C."/>
            <person name="Glavina T."/>
            <person name="Hammon N."/>
            <person name="Israni S."/>
            <person name="Pitluck S."/>
            <person name="Chertkov O."/>
            <person name="Schmutz J."/>
            <person name="Larimer F."/>
            <person name="Land M."/>
            <person name="Kyrpides N."/>
            <person name="Ivanova N."/>
            <person name="Richardson P."/>
        </authorList>
    </citation>
    <scope>NUCLEOTIDE SEQUENCE [LARGE SCALE GENOMIC DNA]</scope>
    <source>
        <strain>DSM 2380 / NBRC 103641 / GraBd1</strain>
    </source>
</reference>
<accession>Q3A6N8</accession>
<sequence length="88" mass="10448">MSKIRGNRKTRVGVVISDKMDKTVVVKVDQMVKHPIYKKYIKRRVTFKAHDEENRCNVGDKVSVVETRPLSRDKRWRVREILEKNVIL</sequence>
<keyword id="KW-1185">Reference proteome</keyword>
<keyword id="KW-0687">Ribonucleoprotein</keyword>
<keyword id="KW-0689">Ribosomal protein</keyword>
<keyword id="KW-0694">RNA-binding</keyword>
<keyword id="KW-0699">rRNA-binding</keyword>
<protein>
    <recommendedName>
        <fullName evidence="1">Small ribosomal subunit protein uS17</fullName>
    </recommendedName>
    <alternativeName>
        <fullName evidence="2">30S ribosomal protein S17</fullName>
    </alternativeName>
</protein>
<dbReference type="EMBL" id="CP000142">
    <property type="protein sequence ID" value="ABA87969.1"/>
    <property type="molecule type" value="Genomic_DNA"/>
</dbReference>
<dbReference type="RefSeq" id="WP_011340412.1">
    <property type="nucleotide sequence ID" value="NC_007498.2"/>
</dbReference>
<dbReference type="SMR" id="Q3A6N8"/>
<dbReference type="STRING" id="338963.Pcar_0710"/>
<dbReference type="KEGG" id="pca:Pcar_0710"/>
<dbReference type="eggNOG" id="COG0186">
    <property type="taxonomic scope" value="Bacteria"/>
</dbReference>
<dbReference type="HOGENOM" id="CLU_073626_1_0_7"/>
<dbReference type="OrthoDB" id="9811714at2"/>
<dbReference type="Proteomes" id="UP000002534">
    <property type="component" value="Chromosome"/>
</dbReference>
<dbReference type="GO" id="GO:0022627">
    <property type="term" value="C:cytosolic small ribosomal subunit"/>
    <property type="evidence" value="ECO:0007669"/>
    <property type="project" value="TreeGrafter"/>
</dbReference>
<dbReference type="GO" id="GO:0019843">
    <property type="term" value="F:rRNA binding"/>
    <property type="evidence" value="ECO:0007669"/>
    <property type="project" value="UniProtKB-UniRule"/>
</dbReference>
<dbReference type="GO" id="GO:0003735">
    <property type="term" value="F:structural constituent of ribosome"/>
    <property type="evidence" value="ECO:0007669"/>
    <property type="project" value="InterPro"/>
</dbReference>
<dbReference type="GO" id="GO:0006412">
    <property type="term" value="P:translation"/>
    <property type="evidence" value="ECO:0007669"/>
    <property type="project" value="UniProtKB-UniRule"/>
</dbReference>
<dbReference type="CDD" id="cd00364">
    <property type="entry name" value="Ribosomal_uS17"/>
    <property type="match status" value="1"/>
</dbReference>
<dbReference type="Gene3D" id="2.40.50.140">
    <property type="entry name" value="Nucleic acid-binding proteins"/>
    <property type="match status" value="1"/>
</dbReference>
<dbReference type="HAMAP" id="MF_01345_B">
    <property type="entry name" value="Ribosomal_uS17_B"/>
    <property type="match status" value="1"/>
</dbReference>
<dbReference type="InterPro" id="IPR012340">
    <property type="entry name" value="NA-bd_OB-fold"/>
</dbReference>
<dbReference type="InterPro" id="IPR000266">
    <property type="entry name" value="Ribosomal_uS17"/>
</dbReference>
<dbReference type="InterPro" id="IPR019984">
    <property type="entry name" value="Ribosomal_uS17_bact/chlr"/>
</dbReference>
<dbReference type="InterPro" id="IPR019979">
    <property type="entry name" value="Ribosomal_uS17_CS"/>
</dbReference>
<dbReference type="NCBIfam" id="NF004123">
    <property type="entry name" value="PRK05610.1"/>
    <property type="match status" value="1"/>
</dbReference>
<dbReference type="NCBIfam" id="TIGR03635">
    <property type="entry name" value="uS17_bact"/>
    <property type="match status" value="1"/>
</dbReference>
<dbReference type="PANTHER" id="PTHR10744">
    <property type="entry name" value="40S RIBOSOMAL PROTEIN S11 FAMILY MEMBER"/>
    <property type="match status" value="1"/>
</dbReference>
<dbReference type="PANTHER" id="PTHR10744:SF1">
    <property type="entry name" value="SMALL RIBOSOMAL SUBUNIT PROTEIN US17M"/>
    <property type="match status" value="1"/>
</dbReference>
<dbReference type="Pfam" id="PF00366">
    <property type="entry name" value="Ribosomal_S17"/>
    <property type="match status" value="1"/>
</dbReference>
<dbReference type="PRINTS" id="PR00973">
    <property type="entry name" value="RIBOSOMALS17"/>
</dbReference>
<dbReference type="SUPFAM" id="SSF50249">
    <property type="entry name" value="Nucleic acid-binding proteins"/>
    <property type="match status" value="1"/>
</dbReference>
<dbReference type="PROSITE" id="PS00056">
    <property type="entry name" value="RIBOSOMAL_S17"/>
    <property type="match status" value="1"/>
</dbReference>
<evidence type="ECO:0000255" key="1">
    <source>
        <dbReference type="HAMAP-Rule" id="MF_01345"/>
    </source>
</evidence>
<evidence type="ECO:0000305" key="2"/>
<proteinExistence type="inferred from homology"/>
<feature type="chain" id="PRO_0000233530" description="Small ribosomal subunit protein uS17">
    <location>
        <begin position="1"/>
        <end position="88"/>
    </location>
</feature>